<organism>
    <name type="scientific">Desulfotalea psychrophila (strain LSv54 / DSM 12343)</name>
    <dbReference type="NCBI Taxonomy" id="177439"/>
    <lineage>
        <taxon>Bacteria</taxon>
        <taxon>Pseudomonadati</taxon>
        <taxon>Thermodesulfobacteriota</taxon>
        <taxon>Desulfobulbia</taxon>
        <taxon>Desulfobulbales</taxon>
        <taxon>Desulfocapsaceae</taxon>
        <taxon>Desulfotalea</taxon>
    </lineage>
</organism>
<name>LON2_DESPS</name>
<sequence length="774" mass="86416">MTKIYPLMPLRDIVIFPHMVAPLVVGREKSIRALEDAMEKKTEIFLVTQLEPTCEDPNEGEIYQCGTLSTVMQLLRLPDGTIKALVEGQRRARIVSRVPHEEFMQVEVEECTEVLPGQDELIAYERELRKAFQQFAHLGKKIGEEVVVSCSSIEDPVKLANVICSHLPLSSKEKQEVLEVETLGGRIELLLEILFRELQLAEVERKINIKVKQKLSRAQRDYYLGEKIREMQKEIGQGEDGVDEMTELENIIKAKKMPAYARARVQKELKKLRGMPAMSAETTVVRSYIDTILGLPWKKRSKGQLNVLKAEGILNKDHYGLEKPKERILEFLAVQSQVAKLKGPILCFVGPPGVGKTSICQSIAKSMGREFARLSLGGLRDEAEIRGHRRTYVGAMAGKVLRAMQKVGVANPVFCLDEIDKMSTDFRGDPAAALLEVLDPEQNSSFNDHYLDLDYDLSQVFFITTANSLEGIPIPLQDRMEIIQLSGYTEEDKQVIAEKYLLPKQLKANGFQKDDIFLSPGAMLTVVRHYTREAGVRGLERVLASLCRKVARDRLQKGKKSKKYRIGEKSVPTYLGTPKYRYGLAEERDEVGLATGLAWTQVGGVLLQIEVILMPGKGKLTLTGQLGDVMQESAQAAYSYIRSRAKELKLEPDFYEKVDIHVHVPEGAIPKDGPSAGITIATTLASALTGRPIRHELAMTGEITLRGRVLPIGGLTEKLLAAKRGNITKVLLPEENGRDLKDVPAKIKNALDIKLVSHMDQVLEQALLSKGKNK</sequence>
<protein>
    <recommendedName>
        <fullName evidence="1">Lon protease 2</fullName>
        <ecNumber evidence="1">3.4.21.53</ecNumber>
    </recommendedName>
    <alternativeName>
        <fullName evidence="1">ATP-dependent protease La 2</fullName>
    </alternativeName>
</protein>
<reference key="1">
    <citation type="journal article" date="2004" name="Environ. Microbiol.">
        <title>The genome of Desulfotalea psychrophila, a sulfate-reducing bacterium from permanently cold Arctic sediments.</title>
        <authorList>
            <person name="Rabus R."/>
            <person name="Ruepp A."/>
            <person name="Frickey T."/>
            <person name="Rattei T."/>
            <person name="Fartmann B."/>
            <person name="Stark M."/>
            <person name="Bauer M."/>
            <person name="Zibat A."/>
            <person name="Lombardot T."/>
            <person name="Becker I."/>
            <person name="Amann J."/>
            <person name="Gellner K."/>
            <person name="Teeling H."/>
            <person name="Leuschner W.D."/>
            <person name="Gloeckner F.-O."/>
            <person name="Lupas A.N."/>
            <person name="Amann R."/>
            <person name="Klenk H.-P."/>
        </authorList>
    </citation>
    <scope>NUCLEOTIDE SEQUENCE [LARGE SCALE GENOMIC DNA]</scope>
    <source>
        <strain>DSM 12343 / LSv54</strain>
    </source>
</reference>
<proteinExistence type="inferred from homology"/>
<dbReference type="EC" id="3.4.21.53" evidence="1"/>
<dbReference type="EMBL" id="CR522870">
    <property type="protein sequence ID" value="CAG37265.1"/>
    <property type="molecule type" value="Genomic_DNA"/>
</dbReference>
<dbReference type="RefSeq" id="WP_011189777.1">
    <property type="nucleotide sequence ID" value="NC_006138.1"/>
</dbReference>
<dbReference type="SMR" id="Q6AK61"/>
<dbReference type="STRING" id="177439.DP2536"/>
<dbReference type="MEROPS" id="S16.001"/>
<dbReference type="KEGG" id="dps:DP2536"/>
<dbReference type="eggNOG" id="COG0466">
    <property type="taxonomic scope" value="Bacteria"/>
</dbReference>
<dbReference type="HOGENOM" id="CLU_004109_4_3_7"/>
<dbReference type="OrthoDB" id="9803599at2"/>
<dbReference type="Proteomes" id="UP000000602">
    <property type="component" value="Chromosome"/>
</dbReference>
<dbReference type="GO" id="GO:0005737">
    <property type="term" value="C:cytoplasm"/>
    <property type="evidence" value="ECO:0007669"/>
    <property type="project" value="UniProtKB-SubCell"/>
</dbReference>
<dbReference type="GO" id="GO:0005524">
    <property type="term" value="F:ATP binding"/>
    <property type="evidence" value="ECO:0007669"/>
    <property type="project" value="UniProtKB-UniRule"/>
</dbReference>
<dbReference type="GO" id="GO:0016887">
    <property type="term" value="F:ATP hydrolysis activity"/>
    <property type="evidence" value="ECO:0007669"/>
    <property type="project" value="UniProtKB-UniRule"/>
</dbReference>
<dbReference type="GO" id="GO:0004176">
    <property type="term" value="F:ATP-dependent peptidase activity"/>
    <property type="evidence" value="ECO:0007669"/>
    <property type="project" value="UniProtKB-UniRule"/>
</dbReference>
<dbReference type="GO" id="GO:0043565">
    <property type="term" value="F:sequence-specific DNA binding"/>
    <property type="evidence" value="ECO:0007669"/>
    <property type="project" value="UniProtKB-UniRule"/>
</dbReference>
<dbReference type="GO" id="GO:0004252">
    <property type="term" value="F:serine-type endopeptidase activity"/>
    <property type="evidence" value="ECO:0007669"/>
    <property type="project" value="UniProtKB-UniRule"/>
</dbReference>
<dbReference type="GO" id="GO:0034605">
    <property type="term" value="P:cellular response to heat"/>
    <property type="evidence" value="ECO:0007669"/>
    <property type="project" value="UniProtKB-UniRule"/>
</dbReference>
<dbReference type="GO" id="GO:0006515">
    <property type="term" value="P:protein quality control for misfolded or incompletely synthesized proteins"/>
    <property type="evidence" value="ECO:0007669"/>
    <property type="project" value="UniProtKB-UniRule"/>
</dbReference>
<dbReference type="CDD" id="cd19500">
    <property type="entry name" value="RecA-like_Lon"/>
    <property type="match status" value="1"/>
</dbReference>
<dbReference type="FunFam" id="3.30.230.10:FF:000010">
    <property type="entry name" value="Lon protease"/>
    <property type="match status" value="1"/>
</dbReference>
<dbReference type="FunFam" id="1.20.5.5270:FF:000002">
    <property type="entry name" value="Lon protease homolog"/>
    <property type="match status" value="1"/>
</dbReference>
<dbReference type="FunFam" id="3.40.50.300:FF:000021">
    <property type="entry name" value="Lon protease homolog"/>
    <property type="match status" value="1"/>
</dbReference>
<dbReference type="Gene3D" id="1.10.8.60">
    <property type="match status" value="1"/>
</dbReference>
<dbReference type="Gene3D" id="1.20.5.5270">
    <property type="match status" value="1"/>
</dbReference>
<dbReference type="Gene3D" id="1.20.58.1480">
    <property type="match status" value="1"/>
</dbReference>
<dbReference type="Gene3D" id="3.30.230.10">
    <property type="match status" value="1"/>
</dbReference>
<dbReference type="Gene3D" id="2.30.130.40">
    <property type="entry name" value="LON domain-like"/>
    <property type="match status" value="1"/>
</dbReference>
<dbReference type="Gene3D" id="3.40.50.300">
    <property type="entry name" value="P-loop containing nucleotide triphosphate hydrolases"/>
    <property type="match status" value="1"/>
</dbReference>
<dbReference type="HAMAP" id="MF_01973">
    <property type="entry name" value="lon_bact"/>
    <property type="match status" value="1"/>
</dbReference>
<dbReference type="InterPro" id="IPR003593">
    <property type="entry name" value="AAA+_ATPase"/>
</dbReference>
<dbReference type="InterPro" id="IPR003959">
    <property type="entry name" value="ATPase_AAA_core"/>
</dbReference>
<dbReference type="InterPro" id="IPR027543">
    <property type="entry name" value="Lon_bac"/>
</dbReference>
<dbReference type="InterPro" id="IPR004815">
    <property type="entry name" value="Lon_bac/euk-typ"/>
</dbReference>
<dbReference type="InterPro" id="IPR054594">
    <property type="entry name" value="Lon_lid"/>
</dbReference>
<dbReference type="InterPro" id="IPR008269">
    <property type="entry name" value="Lon_proteolytic"/>
</dbReference>
<dbReference type="InterPro" id="IPR027065">
    <property type="entry name" value="Lon_Prtase"/>
</dbReference>
<dbReference type="InterPro" id="IPR003111">
    <property type="entry name" value="Lon_prtase_N"/>
</dbReference>
<dbReference type="InterPro" id="IPR046336">
    <property type="entry name" value="Lon_prtase_N_sf"/>
</dbReference>
<dbReference type="InterPro" id="IPR027417">
    <property type="entry name" value="P-loop_NTPase"/>
</dbReference>
<dbReference type="InterPro" id="IPR008268">
    <property type="entry name" value="Peptidase_S16_AS"/>
</dbReference>
<dbReference type="InterPro" id="IPR015947">
    <property type="entry name" value="PUA-like_sf"/>
</dbReference>
<dbReference type="InterPro" id="IPR020568">
    <property type="entry name" value="Ribosomal_Su5_D2-typ_SF"/>
</dbReference>
<dbReference type="InterPro" id="IPR014721">
    <property type="entry name" value="Ribsml_uS5_D2-typ_fold_subgr"/>
</dbReference>
<dbReference type="NCBIfam" id="TIGR00763">
    <property type="entry name" value="lon"/>
    <property type="match status" value="1"/>
</dbReference>
<dbReference type="NCBIfam" id="NF008053">
    <property type="entry name" value="PRK10787.1"/>
    <property type="match status" value="1"/>
</dbReference>
<dbReference type="PANTHER" id="PTHR10046">
    <property type="entry name" value="ATP DEPENDENT LON PROTEASE FAMILY MEMBER"/>
    <property type="match status" value="1"/>
</dbReference>
<dbReference type="Pfam" id="PF00004">
    <property type="entry name" value="AAA"/>
    <property type="match status" value="1"/>
</dbReference>
<dbReference type="Pfam" id="PF05362">
    <property type="entry name" value="Lon_C"/>
    <property type="match status" value="1"/>
</dbReference>
<dbReference type="Pfam" id="PF22667">
    <property type="entry name" value="Lon_lid"/>
    <property type="match status" value="1"/>
</dbReference>
<dbReference type="Pfam" id="PF02190">
    <property type="entry name" value="LON_substr_bdg"/>
    <property type="match status" value="1"/>
</dbReference>
<dbReference type="PIRSF" id="PIRSF001174">
    <property type="entry name" value="Lon_proteas"/>
    <property type="match status" value="1"/>
</dbReference>
<dbReference type="PRINTS" id="PR00830">
    <property type="entry name" value="ENDOLAPTASE"/>
</dbReference>
<dbReference type="SMART" id="SM00382">
    <property type="entry name" value="AAA"/>
    <property type="match status" value="1"/>
</dbReference>
<dbReference type="SMART" id="SM00464">
    <property type="entry name" value="LON"/>
    <property type="match status" value="1"/>
</dbReference>
<dbReference type="SUPFAM" id="SSF52540">
    <property type="entry name" value="P-loop containing nucleoside triphosphate hydrolases"/>
    <property type="match status" value="1"/>
</dbReference>
<dbReference type="SUPFAM" id="SSF88697">
    <property type="entry name" value="PUA domain-like"/>
    <property type="match status" value="1"/>
</dbReference>
<dbReference type="SUPFAM" id="SSF54211">
    <property type="entry name" value="Ribosomal protein S5 domain 2-like"/>
    <property type="match status" value="1"/>
</dbReference>
<dbReference type="PROSITE" id="PS51787">
    <property type="entry name" value="LON_N"/>
    <property type="match status" value="1"/>
</dbReference>
<dbReference type="PROSITE" id="PS51786">
    <property type="entry name" value="LON_PROTEOLYTIC"/>
    <property type="match status" value="1"/>
</dbReference>
<dbReference type="PROSITE" id="PS01046">
    <property type="entry name" value="LON_SER"/>
    <property type="match status" value="1"/>
</dbReference>
<keyword id="KW-0067">ATP-binding</keyword>
<keyword id="KW-0963">Cytoplasm</keyword>
<keyword id="KW-0378">Hydrolase</keyword>
<keyword id="KW-0547">Nucleotide-binding</keyword>
<keyword id="KW-0645">Protease</keyword>
<keyword id="KW-1185">Reference proteome</keyword>
<keyword id="KW-0720">Serine protease</keyword>
<keyword id="KW-0346">Stress response</keyword>
<evidence type="ECO:0000255" key="1">
    <source>
        <dbReference type="HAMAP-Rule" id="MF_01973"/>
    </source>
</evidence>
<evidence type="ECO:0000255" key="2">
    <source>
        <dbReference type="PROSITE-ProRule" id="PRU01122"/>
    </source>
</evidence>
<evidence type="ECO:0000255" key="3">
    <source>
        <dbReference type="PROSITE-ProRule" id="PRU01123"/>
    </source>
</evidence>
<accession>Q6AK61</accession>
<gene>
    <name evidence="1" type="primary">lon2</name>
    <name type="ordered locus">DP2536</name>
</gene>
<comment type="function">
    <text evidence="1">ATP-dependent serine protease that mediates the selective degradation of mutant and abnormal proteins as well as certain short-lived regulatory proteins. Required for cellular homeostasis and for survival from DNA damage and developmental changes induced by stress. Degrades polypeptides processively to yield small peptide fragments that are 5 to 10 amino acids long. Binds to DNA in a double-stranded, site-specific manner.</text>
</comment>
<comment type="catalytic activity">
    <reaction evidence="1">
        <text>Hydrolysis of proteins in presence of ATP.</text>
        <dbReference type="EC" id="3.4.21.53"/>
    </reaction>
</comment>
<comment type="subunit">
    <text evidence="1">Homohexamer. Organized in a ring with a central cavity.</text>
</comment>
<comment type="subcellular location">
    <subcellularLocation>
        <location evidence="1">Cytoplasm</location>
    </subcellularLocation>
</comment>
<comment type="induction">
    <text evidence="1">By heat shock.</text>
</comment>
<comment type="similarity">
    <text evidence="1">Belongs to the peptidase S16 family.</text>
</comment>
<feature type="chain" id="PRO_0000396555" description="Lon protease 2">
    <location>
        <begin position="1"/>
        <end position="774"/>
    </location>
</feature>
<feature type="domain" description="Lon N-terminal" evidence="3">
    <location>
        <begin position="5"/>
        <end position="198"/>
    </location>
</feature>
<feature type="domain" description="Lon proteolytic" evidence="2">
    <location>
        <begin position="588"/>
        <end position="769"/>
    </location>
</feature>
<feature type="active site" evidence="1">
    <location>
        <position position="675"/>
    </location>
</feature>
<feature type="active site" evidence="1">
    <location>
        <position position="718"/>
    </location>
</feature>
<feature type="binding site" evidence="1">
    <location>
        <begin position="350"/>
        <end position="357"/>
    </location>
    <ligand>
        <name>ATP</name>
        <dbReference type="ChEBI" id="CHEBI:30616"/>
    </ligand>
</feature>